<name>Y1656_STAA3</name>
<feature type="chain" id="PRO_0000288897" description="Putative universal stress protein SAUSA300_1656">
    <location>
        <begin position="1"/>
        <end position="166"/>
    </location>
</feature>
<reference key="1">
    <citation type="journal article" date="2006" name="Lancet">
        <title>Complete genome sequence of USA300, an epidemic clone of community-acquired meticillin-resistant Staphylococcus aureus.</title>
        <authorList>
            <person name="Diep B.A."/>
            <person name="Gill S.R."/>
            <person name="Chang R.F."/>
            <person name="Phan T.H."/>
            <person name="Chen J.H."/>
            <person name="Davidson M.G."/>
            <person name="Lin F."/>
            <person name="Lin J."/>
            <person name="Carleton H.A."/>
            <person name="Mongodin E.F."/>
            <person name="Sensabaugh G.F."/>
            <person name="Perdreau-Remington F."/>
        </authorList>
    </citation>
    <scope>NUCLEOTIDE SEQUENCE [LARGE SCALE GENOMIC DNA]</scope>
    <source>
        <strain>USA300</strain>
    </source>
</reference>
<sequence length="166" mass="18475">MITYKNILIAVDGSHEAEWAFNRAVGVAKRNDAKLTIVNVIDSRTYSSYEVYDAQFTEKSKHFAEELLNGYKEVATNAGVKDVETRLEFGSPKSIIPKKLAHEINADLIMSGTSGLNAVERFIVGSVSESIVRHAPCDVLVVRTEELPADFQPQVATTQLREKYQN</sequence>
<dbReference type="EMBL" id="CP000255">
    <property type="protein sequence ID" value="ABD22575.1"/>
    <property type="molecule type" value="Genomic_DNA"/>
</dbReference>
<dbReference type="RefSeq" id="WP_000634175.1">
    <property type="nucleotide sequence ID" value="NZ_CP027476.1"/>
</dbReference>
<dbReference type="SMR" id="Q2FG28"/>
<dbReference type="KEGG" id="saa:SAUSA300_1656"/>
<dbReference type="HOGENOM" id="CLU_049301_16_0_9"/>
<dbReference type="OMA" id="VHYSIEF"/>
<dbReference type="Proteomes" id="UP000001939">
    <property type="component" value="Chromosome"/>
</dbReference>
<dbReference type="GO" id="GO:0005737">
    <property type="term" value="C:cytoplasm"/>
    <property type="evidence" value="ECO:0007669"/>
    <property type="project" value="UniProtKB-SubCell"/>
</dbReference>
<dbReference type="CDD" id="cd00293">
    <property type="entry name" value="USP-like"/>
    <property type="match status" value="1"/>
</dbReference>
<dbReference type="Gene3D" id="3.40.50.620">
    <property type="entry name" value="HUPs"/>
    <property type="match status" value="1"/>
</dbReference>
<dbReference type="InterPro" id="IPR014729">
    <property type="entry name" value="Rossmann-like_a/b/a_fold"/>
</dbReference>
<dbReference type="InterPro" id="IPR006015">
    <property type="entry name" value="Universal_stress_UspA"/>
</dbReference>
<dbReference type="InterPro" id="IPR006016">
    <property type="entry name" value="UspA"/>
</dbReference>
<dbReference type="PANTHER" id="PTHR46268">
    <property type="entry name" value="STRESS RESPONSE PROTEIN NHAX"/>
    <property type="match status" value="1"/>
</dbReference>
<dbReference type="PANTHER" id="PTHR46268:SF6">
    <property type="entry name" value="UNIVERSAL STRESS PROTEIN UP12"/>
    <property type="match status" value="1"/>
</dbReference>
<dbReference type="Pfam" id="PF00582">
    <property type="entry name" value="Usp"/>
    <property type="match status" value="1"/>
</dbReference>
<dbReference type="PIRSF" id="PIRSF006276">
    <property type="entry name" value="UspA"/>
    <property type="match status" value="1"/>
</dbReference>
<dbReference type="PRINTS" id="PR01438">
    <property type="entry name" value="UNVRSLSTRESS"/>
</dbReference>
<dbReference type="SUPFAM" id="SSF52402">
    <property type="entry name" value="Adenine nucleotide alpha hydrolases-like"/>
    <property type="match status" value="1"/>
</dbReference>
<comment type="subcellular location">
    <subcellularLocation>
        <location evidence="1">Cytoplasm</location>
    </subcellularLocation>
</comment>
<comment type="similarity">
    <text evidence="2">Belongs to the universal stress protein A family.</text>
</comment>
<proteinExistence type="inferred from homology"/>
<protein>
    <recommendedName>
        <fullName>Putative universal stress protein SAUSA300_1656</fullName>
    </recommendedName>
</protein>
<organism>
    <name type="scientific">Staphylococcus aureus (strain USA300)</name>
    <dbReference type="NCBI Taxonomy" id="367830"/>
    <lineage>
        <taxon>Bacteria</taxon>
        <taxon>Bacillati</taxon>
        <taxon>Bacillota</taxon>
        <taxon>Bacilli</taxon>
        <taxon>Bacillales</taxon>
        <taxon>Staphylococcaceae</taxon>
        <taxon>Staphylococcus</taxon>
    </lineage>
</organism>
<gene>
    <name type="ordered locus">SAUSA300_1656</name>
</gene>
<keyword id="KW-0963">Cytoplasm</keyword>
<evidence type="ECO:0000250" key="1"/>
<evidence type="ECO:0000305" key="2"/>
<accession>Q2FG28</accession>